<reference key="1">
    <citation type="submission" date="2008-01" db="EMBL/GenBank/DDBJ databases">
        <title>Complete sequence of Thermoanaerobacter pseudethanolicus 39E.</title>
        <authorList>
            <person name="Copeland A."/>
            <person name="Lucas S."/>
            <person name="Lapidus A."/>
            <person name="Barry K."/>
            <person name="Glavina del Rio T."/>
            <person name="Dalin E."/>
            <person name="Tice H."/>
            <person name="Pitluck S."/>
            <person name="Bruce D."/>
            <person name="Goodwin L."/>
            <person name="Saunders E."/>
            <person name="Brettin T."/>
            <person name="Detter J.C."/>
            <person name="Han C."/>
            <person name="Schmutz J."/>
            <person name="Larimer F."/>
            <person name="Land M."/>
            <person name="Hauser L."/>
            <person name="Kyrpides N."/>
            <person name="Lykidis A."/>
            <person name="Hemme C."/>
            <person name="Fields M.W."/>
            <person name="He Z."/>
            <person name="Zhou J."/>
            <person name="Richardson P."/>
        </authorList>
    </citation>
    <scope>NUCLEOTIDE SEQUENCE [LARGE SCALE GENOMIC DNA]</scope>
    <source>
        <strain>ATCC 33223 / DSM 2355 / 39E</strain>
    </source>
</reference>
<sequence length="213" mass="23761">MENISIALPKGRMADSAITLFEKAGIAENILKDISRKLVVNDHKNLMKFMLVKPMDVPTYVEHGAADLGICGKDILLEQKKDCYEVLDLKFGFCKMVVAGPKEAKDSFLTNKRVATKFPNIAEEFFRQKGENVEIIKLNGSVELAPIVGLSEVIVDIVETGNTLRENGLIVIEEIFPSSARLIVNKASLKTKSQRIKEIIIKLKEVVETFKEV</sequence>
<comment type="function">
    <text evidence="1">Catalyzes the condensation of ATP and 5-phosphoribose 1-diphosphate to form N'-(5'-phosphoribosyl)-ATP (PR-ATP). Has a crucial role in the pathway because the rate of histidine biosynthesis seems to be controlled primarily by regulation of HisG enzymatic activity.</text>
</comment>
<comment type="catalytic activity">
    <reaction evidence="1">
        <text>1-(5-phospho-beta-D-ribosyl)-ATP + diphosphate = 5-phospho-alpha-D-ribose 1-diphosphate + ATP</text>
        <dbReference type="Rhea" id="RHEA:18473"/>
        <dbReference type="ChEBI" id="CHEBI:30616"/>
        <dbReference type="ChEBI" id="CHEBI:33019"/>
        <dbReference type="ChEBI" id="CHEBI:58017"/>
        <dbReference type="ChEBI" id="CHEBI:73183"/>
        <dbReference type="EC" id="2.4.2.17"/>
    </reaction>
</comment>
<comment type="pathway">
    <text evidence="1">Amino-acid biosynthesis; L-histidine biosynthesis; L-histidine from 5-phospho-alpha-D-ribose 1-diphosphate: step 1/9.</text>
</comment>
<comment type="subunit">
    <text evidence="1">Heteromultimer composed of HisG and HisZ subunits.</text>
</comment>
<comment type="subcellular location">
    <subcellularLocation>
        <location evidence="1">Cytoplasm</location>
    </subcellularLocation>
</comment>
<comment type="domain">
    <text>Lacks the C-terminal regulatory region which is replaced by HisZ.</text>
</comment>
<comment type="similarity">
    <text evidence="1">Belongs to the ATP phosphoribosyltransferase family. Short subfamily.</text>
</comment>
<name>HIS1_THEP3</name>
<dbReference type="EC" id="2.4.2.17" evidence="1"/>
<dbReference type="EMBL" id="CP000924">
    <property type="protein sequence ID" value="ABY94180.1"/>
    <property type="molecule type" value="Genomic_DNA"/>
</dbReference>
<dbReference type="RefSeq" id="WP_003870626.1">
    <property type="nucleotide sequence ID" value="NC_010321.1"/>
</dbReference>
<dbReference type="SMR" id="B0K733"/>
<dbReference type="STRING" id="340099.Teth39_0515"/>
<dbReference type="KEGG" id="tpd:Teth39_0515"/>
<dbReference type="eggNOG" id="COG0040">
    <property type="taxonomic scope" value="Bacteria"/>
</dbReference>
<dbReference type="HOGENOM" id="CLU_038115_2_0_9"/>
<dbReference type="UniPathway" id="UPA00031">
    <property type="reaction ID" value="UER00006"/>
</dbReference>
<dbReference type="Proteomes" id="UP000002156">
    <property type="component" value="Chromosome"/>
</dbReference>
<dbReference type="GO" id="GO:0005737">
    <property type="term" value="C:cytoplasm"/>
    <property type="evidence" value="ECO:0007669"/>
    <property type="project" value="UniProtKB-SubCell"/>
</dbReference>
<dbReference type="GO" id="GO:0005524">
    <property type="term" value="F:ATP binding"/>
    <property type="evidence" value="ECO:0007669"/>
    <property type="project" value="UniProtKB-KW"/>
</dbReference>
<dbReference type="GO" id="GO:0003879">
    <property type="term" value="F:ATP phosphoribosyltransferase activity"/>
    <property type="evidence" value="ECO:0007669"/>
    <property type="project" value="UniProtKB-UniRule"/>
</dbReference>
<dbReference type="GO" id="GO:0000105">
    <property type="term" value="P:L-histidine biosynthetic process"/>
    <property type="evidence" value="ECO:0007669"/>
    <property type="project" value="UniProtKB-UniRule"/>
</dbReference>
<dbReference type="CDD" id="cd13595">
    <property type="entry name" value="PBP2_HisGs"/>
    <property type="match status" value="1"/>
</dbReference>
<dbReference type="FunFam" id="3.40.190.10:FF:000008">
    <property type="entry name" value="ATP phosphoribosyltransferase"/>
    <property type="match status" value="1"/>
</dbReference>
<dbReference type="Gene3D" id="3.40.190.10">
    <property type="entry name" value="Periplasmic binding protein-like II"/>
    <property type="match status" value="2"/>
</dbReference>
<dbReference type="HAMAP" id="MF_01018">
    <property type="entry name" value="HisG_Short"/>
    <property type="match status" value="1"/>
</dbReference>
<dbReference type="InterPro" id="IPR013820">
    <property type="entry name" value="ATP_PRibTrfase_cat"/>
</dbReference>
<dbReference type="InterPro" id="IPR018198">
    <property type="entry name" value="ATP_PRibTrfase_CS"/>
</dbReference>
<dbReference type="InterPro" id="IPR001348">
    <property type="entry name" value="ATP_PRibTrfase_HisG"/>
</dbReference>
<dbReference type="InterPro" id="IPR024893">
    <property type="entry name" value="ATP_PRibTrfase_HisG_short"/>
</dbReference>
<dbReference type="NCBIfam" id="TIGR00070">
    <property type="entry name" value="hisG"/>
    <property type="match status" value="1"/>
</dbReference>
<dbReference type="PANTHER" id="PTHR21403:SF8">
    <property type="entry name" value="ATP PHOSPHORIBOSYLTRANSFERASE"/>
    <property type="match status" value="1"/>
</dbReference>
<dbReference type="PANTHER" id="PTHR21403">
    <property type="entry name" value="ATP PHOSPHORIBOSYLTRANSFERASE ATP-PRTASE"/>
    <property type="match status" value="1"/>
</dbReference>
<dbReference type="Pfam" id="PF01634">
    <property type="entry name" value="HisG"/>
    <property type="match status" value="1"/>
</dbReference>
<dbReference type="SUPFAM" id="SSF53850">
    <property type="entry name" value="Periplasmic binding protein-like II"/>
    <property type="match status" value="1"/>
</dbReference>
<dbReference type="PROSITE" id="PS01316">
    <property type="entry name" value="ATP_P_PHORIBOSYLTR"/>
    <property type="match status" value="1"/>
</dbReference>
<protein>
    <recommendedName>
        <fullName evidence="1">ATP phosphoribosyltransferase</fullName>
        <shortName evidence="1">ATP-PRT</shortName>
        <shortName evidence="1">ATP-PRTase</shortName>
        <ecNumber evidence="1">2.4.2.17</ecNumber>
    </recommendedName>
</protein>
<accession>B0K733</accession>
<feature type="chain" id="PRO_1000135294" description="ATP phosphoribosyltransferase">
    <location>
        <begin position="1"/>
        <end position="213"/>
    </location>
</feature>
<evidence type="ECO:0000255" key="1">
    <source>
        <dbReference type="HAMAP-Rule" id="MF_01018"/>
    </source>
</evidence>
<organism>
    <name type="scientific">Thermoanaerobacter pseudethanolicus (strain ATCC 33223 / 39E)</name>
    <name type="common">Clostridium thermohydrosulfuricum</name>
    <dbReference type="NCBI Taxonomy" id="340099"/>
    <lineage>
        <taxon>Bacteria</taxon>
        <taxon>Bacillati</taxon>
        <taxon>Bacillota</taxon>
        <taxon>Clostridia</taxon>
        <taxon>Thermoanaerobacterales</taxon>
        <taxon>Thermoanaerobacteraceae</taxon>
        <taxon>Thermoanaerobacter</taxon>
    </lineage>
</organism>
<proteinExistence type="inferred from homology"/>
<keyword id="KW-0028">Amino-acid biosynthesis</keyword>
<keyword id="KW-0067">ATP-binding</keyword>
<keyword id="KW-0963">Cytoplasm</keyword>
<keyword id="KW-0328">Glycosyltransferase</keyword>
<keyword id="KW-0368">Histidine biosynthesis</keyword>
<keyword id="KW-0547">Nucleotide-binding</keyword>
<keyword id="KW-1185">Reference proteome</keyword>
<keyword id="KW-0808">Transferase</keyword>
<gene>
    <name evidence="1" type="primary">hisG</name>
    <name type="ordered locus">Teth39_0515</name>
</gene>